<feature type="chain" id="PRO_0000255173" description="Lipid-A-disaccharide synthase">
    <location>
        <begin position="1"/>
        <end position="625"/>
    </location>
</feature>
<feature type="region of interest" description="Unknown">
    <location>
        <begin position="1"/>
        <end position="224"/>
    </location>
</feature>
<feature type="region of interest" description="Lipid-A-disaccharide synthase">
    <location>
        <begin position="225"/>
        <end position="625"/>
    </location>
</feature>
<protein>
    <recommendedName>
        <fullName>Lipid-A-disaccharide synthase</fullName>
        <ecNumber>2.4.1.182</ecNumber>
    </recommendedName>
</protein>
<sequence length="625" mass="71007">MLPLHLVHVLYPIGLIANLFFGSAFTIQWFLSERRKKACVPKSFWILSSIGAVMMIAHGFIQSQFPIALLHGANLVIYFRNLNVSSSHSLSLRATLFILVVTLLLTTLPFVLGSYYYPNMQWMASPNIFHLPLPPPNIYWHIAGCIGLFTFSSRFFIQWCHLEINNRSTLPALFWLVSFIGGFLAFLYFIRTGDPVNIISYGCGLLPSLANLLIIYKKSRLPEFHNHSYFLSAGEPSGDILGSDLLHNIKTCDPTIRCFGVGGPLMRKEGFEPLIHMEEFQVSGFLEVFFSIFGLFKKYRRLYKAILQENPETVFCIDFPDFHFFLIKKLRKCGYKGKIIHYVCPSIWAWRPKRKKILEKYLDTLLLILPFEKDLFINSPLKTIYLGHPLVKTISNFQYCSSWKQQLSISDQPIVALFPGSRPGDIFRNLQVQIRAFLASSLAQSHQILVSSCNPKYDKNILDVLEKEGCRGKIISSTFRYQLMRDCDCALAKCGTIVLEAALNQTPTIVTCLLGPIDTFLAKYIFKILMPAYSLPNIITGSIIFPEFIGGKHDFNPEEVAAAIDILAKPKSKEKQKLACQQLLDTLMTNVVTPEECLRIICSQNSHLHLEKGILKNLHPRDSSV</sequence>
<evidence type="ECO:0000250" key="1"/>
<evidence type="ECO:0000305" key="2"/>
<dbReference type="EC" id="2.4.1.182"/>
<dbReference type="EMBL" id="AP006861">
    <property type="protein sequence ID" value="BAE80993.1"/>
    <property type="molecule type" value="Genomic_DNA"/>
</dbReference>
<dbReference type="RefSeq" id="WP_011457775.1">
    <property type="nucleotide sequence ID" value="NC_007899.1"/>
</dbReference>
<dbReference type="SMR" id="Q255P5"/>
<dbReference type="STRING" id="264202.CF0221"/>
<dbReference type="CAZy" id="GT19">
    <property type="family name" value="Glycosyltransferase Family 19"/>
</dbReference>
<dbReference type="KEGG" id="cfe:CF0221"/>
<dbReference type="eggNOG" id="COG0763">
    <property type="taxonomic scope" value="Bacteria"/>
</dbReference>
<dbReference type="eggNOG" id="COG3952">
    <property type="taxonomic scope" value="Bacteria"/>
</dbReference>
<dbReference type="HOGENOM" id="CLU_430672_0_0_0"/>
<dbReference type="OrthoDB" id="9801642at2"/>
<dbReference type="UniPathway" id="UPA00973"/>
<dbReference type="Proteomes" id="UP000001260">
    <property type="component" value="Chromosome"/>
</dbReference>
<dbReference type="GO" id="GO:0016020">
    <property type="term" value="C:membrane"/>
    <property type="evidence" value="ECO:0007669"/>
    <property type="project" value="GOC"/>
</dbReference>
<dbReference type="GO" id="GO:0008915">
    <property type="term" value="F:lipid-A-disaccharide synthase activity"/>
    <property type="evidence" value="ECO:0007669"/>
    <property type="project" value="UniProtKB-UniRule"/>
</dbReference>
<dbReference type="GO" id="GO:0005543">
    <property type="term" value="F:phospholipid binding"/>
    <property type="evidence" value="ECO:0007669"/>
    <property type="project" value="TreeGrafter"/>
</dbReference>
<dbReference type="GO" id="GO:0009245">
    <property type="term" value="P:lipid A biosynthetic process"/>
    <property type="evidence" value="ECO:0007669"/>
    <property type="project" value="UniProtKB-UniRule"/>
</dbReference>
<dbReference type="HAMAP" id="MF_00392">
    <property type="entry name" value="LpxB"/>
    <property type="match status" value="1"/>
</dbReference>
<dbReference type="InterPro" id="IPR003835">
    <property type="entry name" value="Glyco_trans_19"/>
</dbReference>
<dbReference type="InterPro" id="IPR011499">
    <property type="entry name" value="Lipid_A_biosynth_N"/>
</dbReference>
<dbReference type="NCBIfam" id="NF002173">
    <property type="entry name" value="PRK01021.1"/>
    <property type="match status" value="1"/>
</dbReference>
<dbReference type="PANTHER" id="PTHR30372">
    <property type="entry name" value="LIPID-A-DISACCHARIDE SYNTHASE"/>
    <property type="match status" value="1"/>
</dbReference>
<dbReference type="PANTHER" id="PTHR30372:SF4">
    <property type="entry name" value="LIPID-A-DISACCHARIDE SYNTHASE, MITOCHONDRIAL-RELATED"/>
    <property type="match status" value="1"/>
</dbReference>
<dbReference type="Pfam" id="PF07578">
    <property type="entry name" value="LAB_N"/>
    <property type="match status" value="2"/>
</dbReference>
<dbReference type="Pfam" id="PF02684">
    <property type="entry name" value="LpxB"/>
    <property type="match status" value="1"/>
</dbReference>
<dbReference type="SMART" id="SM01259">
    <property type="entry name" value="LAB_N"/>
    <property type="match status" value="2"/>
</dbReference>
<dbReference type="SUPFAM" id="SSF53756">
    <property type="entry name" value="UDP-Glycosyltransferase/glycogen phosphorylase"/>
    <property type="match status" value="1"/>
</dbReference>
<reference key="1">
    <citation type="journal article" date="2006" name="DNA Res.">
        <title>Genome sequence of the cat pathogen, Chlamydophila felis.</title>
        <authorList>
            <person name="Azuma Y."/>
            <person name="Hirakawa H."/>
            <person name="Yamashita A."/>
            <person name="Cai Y."/>
            <person name="Rahman M.A."/>
            <person name="Suzuki H."/>
            <person name="Mitaku S."/>
            <person name="Toh H."/>
            <person name="Goto S."/>
            <person name="Murakami T."/>
            <person name="Sugi K."/>
            <person name="Hayashi H."/>
            <person name="Fukushi H."/>
            <person name="Hattori M."/>
            <person name="Kuhara S."/>
            <person name="Shirai M."/>
        </authorList>
    </citation>
    <scope>NUCLEOTIDE SEQUENCE [LARGE SCALE GENOMIC DNA]</scope>
    <source>
        <strain>Fe/C-56</strain>
    </source>
</reference>
<name>LPXB_CHLFF</name>
<proteinExistence type="inferred from homology"/>
<gene>
    <name type="primary">lpxB</name>
    <name type="ordered locus">CF0221</name>
</gene>
<keyword id="KW-0328">Glycosyltransferase</keyword>
<keyword id="KW-0441">Lipid A biosynthesis</keyword>
<keyword id="KW-0444">Lipid biosynthesis</keyword>
<keyword id="KW-0443">Lipid metabolism</keyword>
<keyword id="KW-0808">Transferase</keyword>
<accession>Q255P5</accession>
<comment type="function">
    <text evidence="1">Condensation of UDP-2,3-diacylglucosamine and 2,3-diacylglucosamine-1-phosphate to form lipid A disaccharide, a precursor of lipid A, a phosphorylated glycolipid that anchors the lipopolysaccharide to the outer membrane of the cell.</text>
</comment>
<comment type="catalytic activity">
    <reaction>
        <text>a lipid X + a UDP-2-N,3-O-bis[(3R)-3-hydroxyacyl]-alpha-D-glucosamine = a lipid A disaccharide + UDP + H(+)</text>
        <dbReference type="Rhea" id="RHEA:67828"/>
        <dbReference type="ChEBI" id="CHEBI:15378"/>
        <dbReference type="ChEBI" id="CHEBI:58223"/>
        <dbReference type="ChEBI" id="CHEBI:137748"/>
        <dbReference type="ChEBI" id="CHEBI:176338"/>
        <dbReference type="ChEBI" id="CHEBI:176343"/>
        <dbReference type="EC" id="2.4.1.182"/>
    </reaction>
</comment>
<comment type="pathway">
    <text>Bacterial outer membrane biogenesis; LPS lipid A biosynthesis.</text>
</comment>
<comment type="similarity">
    <text evidence="2">In the C-terminal section; belongs to the LpxB family.</text>
</comment>
<organism>
    <name type="scientific">Chlamydia felis (strain Fe/C-56)</name>
    <name type="common">Chlamydophila felis</name>
    <dbReference type="NCBI Taxonomy" id="264202"/>
    <lineage>
        <taxon>Bacteria</taxon>
        <taxon>Pseudomonadati</taxon>
        <taxon>Chlamydiota</taxon>
        <taxon>Chlamydiia</taxon>
        <taxon>Chlamydiales</taxon>
        <taxon>Chlamydiaceae</taxon>
        <taxon>Chlamydia/Chlamydophila group</taxon>
        <taxon>Chlamydia</taxon>
    </lineage>
</organism>